<name>PRMA_STRMU</name>
<sequence>MDKWQELTITVNREAEEAASNILIECGSQGVVIDDSADYLGKVGKYGEVFPEVEQVEMVTITAYYPESADMTVITAQVNERLAELTDFGLQTGQVQLTTQELAEEDWAENWKKYYEPTRITHDLTIVPSWTDYEVQAGEKIIKLDPGMAFGTGTHPTTKMSLFALEQVLRGGETVIDVGTGSGVLSVASSLLGAKEIFAYDLDDVAVRVAQENIDLNVGTENIHVTAGDLLKGIAIEADVIVANILADILVNLTDDAYRLVKDEGYLIMSGIISEKLDMVLEAAHSAGFFLETHMIQGEWNALVFKKTDAISGVIGG</sequence>
<proteinExistence type="inferred from homology"/>
<keyword id="KW-0963">Cytoplasm</keyword>
<keyword id="KW-0489">Methyltransferase</keyword>
<keyword id="KW-1185">Reference proteome</keyword>
<keyword id="KW-0949">S-adenosyl-L-methionine</keyword>
<keyword id="KW-0808">Transferase</keyword>
<organism>
    <name type="scientific">Streptococcus mutans serotype c (strain ATCC 700610 / UA159)</name>
    <dbReference type="NCBI Taxonomy" id="210007"/>
    <lineage>
        <taxon>Bacteria</taxon>
        <taxon>Bacillati</taxon>
        <taxon>Bacillota</taxon>
        <taxon>Bacilli</taxon>
        <taxon>Lactobacillales</taxon>
        <taxon>Streptococcaceae</taxon>
        <taxon>Streptococcus</taxon>
    </lineage>
</organism>
<evidence type="ECO:0000255" key="1">
    <source>
        <dbReference type="HAMAP-Rule" id="MF_00735"/>
    </source>
</evidence>
<protein>
    <recommendedName>
        <fullName evidence="1">Ribosomal protein L11 methyltransferase</fullName>
        <shortName evidence="1">L11 Mtase</shortName>
        <ecNumber evidence="1">2.1.1.-</ecNumber>
    </recommendedName>
</protein>
<accession>Q8DS02</accession>
<feature type="chain" id="PRO_0000192315" description="Ribosomal protein L11 methyltransferase">
    <location>
        <begin position="1"/>
        <end position="317"/>
    </location>
</feature>
<feature type="binding site" evidence="1">
    <location>
        <position position="158"/>
    </location>
    <ligand>
        <name>S-adenosyl-L-methionine</name>
        <dbReference type="ChEBI" id="CHEBI:59789"/>
    </ligand>
</feature>
<feature type="binding site" evidence="1">
    <location>
        <position position="179"/>
    </location>
    <ligand>
        <name>S-adenosyl-L-methionine</name>
        <dbReference type="ChEBI" id="CHEBI:59789"/>
    </ligand>
</feature>
<feature type="binding site" evidence="1">
    <location>
        <position position="201"/>
    </location>
    <ligand>
        <name>S-adenosyl-L-methionine</name>
        <dbReference type="ChEBI" id="CHEBI:59789"/>
    </ligand>
</feature>
<feature type="binding site" evidence="1">
    <location>
        <position position="244"/>
    </location>
    <ligand>
        <name>S-adenosyl-L-methionine</name>
        <dbReference type="ChEBI" id="CHEBI:59789"/>
    </ligand>
</feature>
<dbReference type="EC" id="2.1.1.-" evidence="1"/>
<dbReference type="EMBL" id="AE014133">
    <property type="protein sequence ID" value="AAN59649.1"/>
    <property type="molecule type" value="Genomic_DNA"/>
</dbReference>
<dbReference type="RefSeq" id="NP_722343.1">
    <property type="nucleotide sequence ID" value="NC_004350.2"/>
</dbReference>
<dbReference type="RefSeq" id="WP_002262361.1">
    <property type="nucleotide sequence ID" value="NC_004350.2"/>
</dbReference>
<dbReference type="SMR" id="Q8DS02"/>
<dbReference type="STRING" id="210007.SMU_2050c"/>
<dbReference type="KEGG" id="smu:SMU_2050c"/>
<dbReference type="PATRIC" id="fig|210007.7.peg.1827"/>
<dbReference type="eggNOG" id="COG2264">
    <property type="taxonomic scope" value="Bacteria"/>
</dbReference>
<dbReference type="HOGENOM" id="CLU_049382_0_1_9"/>
<dbReference type="OrthoDB" id="9785995at2"/>
<dbReference type="PhylomeDB" id="Q8DS02"/>
<dbReference type="Proteomes" id="UP000002512">
    <property type="component" value="Chromosome"/>
</dbReference>
<dbReference type="GO" id="GO:0005737">
    <property type="term" value="C:cytoplasm"/>
    <property type="evidence" value="ECO:0007669"/>
    <property type="project" value="UniProtKB-SubCell"/>
</dbReference>
<dbReference type="GO" id="GO:0016279">
    <property type="term" value="F:protein-lysine N-methyltransferase activity"/>
    <property type="evidence" value="ECO:0007669"/>
    <property type="project" value="RHEA"/>
</dbReference>
<dbReference type="GO" id="GO:0032259">
    <property type="term" value="P:methylation"/>
    <property type="evidence" value="ECO:0007669"/>
    <property type="project" value="UniProtKB-KW"/>
</dbReference>
<dbReference type="CDD" id="cd02440">
    <property type="entry name" value="AdoMet_MTases"/>
    <property type="match status" value="1"/>
</dbReference>
<dbReference type="Gene3D" id="3.40.50.150">
    <property type="entry name" value="Vaccinia Virus protein VP39"/>
    <property type="match status" value="1"/>
</dbReference>
<dbReference type="HAMAP" id="MF_00735">
    <property type="entry name" value="Methyltr_PrmA"/>
    <property type="match status" value="1"/>
</dbReference>
<dbReference type="InterPro" id="IPR050078">
    <property type="entry name" value="Ribosomal_L11_MeTrfase_PrmA"/>
</dbReference>
<dbReference type="InterPro" id="IPR004498">
    <property type="entry name" value="Ribosomal_PrmA_MeTrfase"/>
</dbReference>
<dbReference type="InterPro" id="IPR029063">
    <property type="entry name" value="SAM-dependent_MTases_sf"/>
</dbReference>
<dbReference type="NCBIfam" id="TIGR00406">
    <property type="entry name" value="prmA"/>
    <property type="match status" value="1"/>
</dbReference>
<dbReference type="PANTHER" id="PTHR43648">
    <property type="entry name" value="ELECTRON TRANSFER FLAVOPROTEIN BETA SUBUNIT LYSINE METHYLTRANSFERASE"/>
    <property type="match status" value="1"/>
</dbReference>
<dbReference type="PANTHER" id="PTHR43648:SF1">
    <property type="entry name" value="ELECTRON TRANSFER FLAVOPROTEIN BETA SUBUNIT LYSINE METHYLTRANSFERASE"/>
    <property type="match status" value="1"/>
</dbReference>
<dbReference type="Pfam" id="PF06325">
    <property type="entry name" value="PrmA"/>
    <property type="match status" value="1"/>
</dbReference>
<dbReference type="PIRSF" id="PIRSF000401">
    <property type="entry name" value="RPL11_MTase"/>
    <property type="match status" value="1"/>
</dbReference>
<dbReference type="SUPFAM" id="SSF53335">
    <property type="entry name" value="S-adenosyl-L-methionine-dependent methyltransferases"/>
    <property type="match status" value="1"/>
</dbReference>
<comment type="function">
    <text evidence="1">Methylates ribosomal protein L11.</text>
</comment>
<comment type="catalytic activity">
    <reaction evidence="1">
        <text>L-lysyl-[protein] + 3 S-adenosyl-L-methionine = N(6),N(6),N(6)-trimethyl-L-lysyl-[protein] + 3 S-adenosyl-L-homocysteine + 3 H(+)</text>
        <dbReference type="Rhea" id="RHEA:54192"/>
        <dbReference type="Rhea" id="RHEA-COMP:9752"/>
        <dbReference type="Rhea" id="RHEA-COMP:13826"/>
        <dbReference type="ChEBI" id="CHEBI:15378"/>
        <dbReference type="ChEBI" id="CHEBI:29969"/>
        <dbReference type="ChEBI" id="CHEBI:57856"/>
        <dbReference type="ChEBI" id="CHEBI:59789"/>
        <dbReference type="ChEBI" id="CHEBI:61961"/>
    </reaction>
</comment>
<comment type="subcellular location">
    <subcellularLocation>
        <location evidence="1">Cytoplasm</location>
    </subcellularLocation>
</comment>
<comment type="similarity">
    <text evidence="1">Belongs to the methyltransferase superfamily. PrmA family.</text>
</comment>
<reference key="1">
    <citation type="journal article" date="2002" name="Proc. Natl. Acad. Sci. U.S.A.">
        <title>Genome sequence of Streptococcus mutans UA159, a cariogenic dental pathogen.</title>
        <authorList>
            <person name="Ajdic D.J."/>
            <person name="McShan W.M."/>
            <person name="McLaughlin R.E."/>
            <person name="Savic G."/>
            <person name="Chang J."/>
            <person name="Carson M.B."/>
            <person name="Primeaux C."/>
            <person name="Tian R."/>
            <person name="Kenton S."/>
            <person name="Jia H.G."/>
            <person name="Lin S.P."/>
            <person name="Qian Y."/>
            <person name="Li S."/>
            <person name="Zhu H."/>
            <person name="Najar F.Z."/>
            <person name="Lai H."/>
            <person name="White J."/>
            <person name="Roe B.A."/>
            <person name="Ferretti J.J."/>
        </authorList>
    </citation>
    <scope>NUCLEOTIDE SEQUENCE [LARGE SCALE GENOMIC DNA]</scope>
    <source>
        <strain>ATCC 700610 / UA159</strain>
    </source>
</reference>
<gene>
    <name evidence="1" type="primary">prmA</name>
    <name type="ordered locus">SMU_2050c</name>
</gene>